<accession>Q755Q0</accession>
<organism>
    <name type="scientific">Eremothecium gossypii (strain ATCC 10895 / CBS 109.51 / FGSC 9923 / NRRL Y-1056)</name>
    <name type="common">Yeast</name>
    <name type="synonym">Ashbya gossypii</name>
    <dbReference type="NCBI Taxonomy" id="284811"/>
    <lineage>
        <taxon>Eukaryota</taxon>
        <taxon>Fungi</taxon>
        <taxon>Dikarya</taxon>
        <taxon>Ascomycota</taxon>
        <taxon>Saccharomycotina</taxon>
        <taxon>Saccharomycetes</taxon>
        <taxon>Saccharomycetales</taxon>
        <taxon>Saccharomycetaceae</taxon>
        <taxon>Eremothecium</taxon>
    </lineage>
</organism>
<sequence length="652" mass="74110">MYYTPKGLLSGRPGQTMVRESESATGGEGIYAGSPLGNALDWGIDVYTDRSPTVVNDDFEPLDSTMDELFLFPTCRDSYSGTPMGELIRRVFEHGALGGEHFLEEFQYTIITSKGLNVNGMTAPVSSVTGISELNNQNAGPGKTMVHAPTKYGRLVGSRKVLYLRKTVSFLPVALFCVRCFRRLLLVRSKSRKNIIVALLVAIYLALQQENFHSRYVRHATMMNLGKMLNSWSDVEARMHRYHIRLKELTIYRPITLTGGKPPTYPTNNHSLLADLLNMASDMLYYKIKHIVTELLSLADTENLVHYCGIYDVNMVTLYGYLHTTSDLGTADKINRLQLLKKFSLCILLSITRFDRIVTTRSAVVLKLFPNYKHRYMKETEKLLLLSKALGDVADCLNEVSKVLESYKSQLKYIETSINDQHNNVLPQPVMIESGLERVTVTLNELNEIQNKLFHAESDDETLRKFVQEKLHELCHFWEHTTTKKPTSLLPPQVTSPHRQFHNTSNGFVLNVVKAIETNPAMAPQLTSYEPVTPAGSESCLEQDFLESNFSTESGEHIYSTADEETVAPQYLVDRFDKLSHEELRLRLDEQFKRLTVDTKPPKQHSKKDRLEVLNMNVRDGSNNGYESGPFYSKEESIPVLYELNQLLSNRR</sequence>
<gene>
    <name type="primary">INP2</name>
    <name type="ordered locus">AFL193W</name>
</gene>
<comment type="function">
    <text evidence="1">Required for peroxisome inheritance.</text>
</comment>
<comment type="subcellular location">
    <subcellularLocation>
        <location evidence="1">Peroxisome membrane</location>
        <topology evidence="1">Single-pass membrane protein</topology>
    </subcellularLocation>
</comment>
<comment type="similarity">
    <text evidence="3">Belongs to the INP2 family.</text>
</comment>
<proteinExistence type="inferred from homology"/>
<evidence type="ECO:0000250" key="1"/>
<evidence type="ECO:0000255" key="2"/>
<evidence type="ECO:0000305" key="3"/>
<dbReference type="EMBL" id="AE016819">
    <property type="protein sequence ID" value="AAS53181.1"/>
    <property type="molecule type" value="Genomic_DNA"/>
</dbReference>
<dbReference type="RefSeq" id="NP_985357.1">
    <property type="nucleotide sequence ID" value="NM_210711.1"/>
</dbReference>
<dbReference type="SMR" id="Q755Q0"/>
<dbReference type="FunCoup" id="Q755Q0">
    <property type="interactions" value="129"/>
</dbReference>
<dbReference type="STRING" id="284811.Q755Q0"/>
<dbReference type="GlyCosmos" id="Q755Q0">
    <property type="glycosylation" value="3 sites, No reported glycans"/>
</dbReference>
<dbReference type="EnsemblFungi" id="AAS53181">
    <property type="protein sequence ID" value="AAS53181"/>
    <property type="gene ID" value="AGOS_AFL193W"/>
</dbReference>
<dbReference type="GeneID" id="4621582"/>
<dbReference type="KEGG" id="ago:AGOS_AFL193W"/>
<dbReference type="eggNOG" id="ENOG502QR0E">
    <property type="taxonomic scope" value="Eukaryota"/>
</dbReference>
<dbReference type="HOGENOM" id="CLU_024345_0_0_1"/>
<dbReference type="InParanoid" id="Q755Q0"/>
<dbReference type="OrthoDB" id="4045067at2759"/>
<dbReference type="Proteomes" id="UP000000591">
    <property type="component" value="Chromosome VI"/>
</dbReference>
<dbReference type="GO" id="GO:0005778">
    <property type="term" value="C:peroxisomal membrane"/>
    <property type="evidence" value="ECO:0007669"/>
    <property type="project" value="UniProtKB-SubCell"/>
</dbReference>
<dbReference type="GO" id="GO:0045033">
    <property type="term" value="P:peroxisome inheritance"/>
    <property type="evidence" value="ECO:0007669"/>
    <property type="project" value="InterPro"/>
</dbReference>
<dbReference type="InterPro" id="IPR026235">
    <property type="entry name" value="INP2"/>
</dbReference>
<dbReference type="PRINTS" id="PR02104">
    <property type="entry name" value="INPROXISOME2"/>
</dbReference>
<reference key="1">
    <citation type="journal article" date="2004" name="Science">
        <title>The Ashbya gossypii genome as a tool for mapping the ancient Saccharomyces cerevisiae genome.</title>
        <authorList>
            <person name="Dietrich F.S."/>
            <person name="Voegeli S."/>
            <person name="Brachat S."/>
            <person name="Lerch A."/>
            <person name="Gates K."/>
            <person name="Steiner S."/>
            <person name="Mohr C."/>
            <person name="Poehlmann R."/>
            <person name="Luedi P."/>
            <person name="Choi S."/>
            <person name="Wing R.A."/>
            <person name="Flavier A."/>
            <person name="Gaffney T.D."/>
            <person name="Philippsen P."/>
        </authorList>
    </citation>
    <scope>NUCLEOTIDE SEQUENCE [LARGE SCALE GENOMIC DNA]</scope>
    <source>
        <strain>ATCC 10895 / CBS 109.51 / FGSC 9923 / NRRL Y-1056</strain>
    </source>
</reference>
<reference key="2">
    <citation type="journal article" date="2013" name="G3 (Bethesda)">
        <title>Genomes of Ashbya fungi isolated from insects reveal four mating-type loci, numerous translocations, lack of transposons, and distinct gene duplications.</title>
        <authorList>
            <person name="Dietrich F.S."/>
            <person name="Voegeli S."/>
            <person name="Kuo S."/>
            <person name="Philippsen P."/>
        </authorList>
    </citation>
    <scope>GENOME REANNOTATION</scope>
    <source>
        <strain>ATCC 10895 / CBS 109.51 / FGSC 9923 / NRRL Y-1056</strain>
    </source>
</reference>
<feature type="chain" id="PRO_0000308732" description="Inheritance of peroxisomes protein 2">
    <location>
        <begin position="1"/>
        <end position="652"/>
    </location>
</feature>
<feature type="transmembrane region" description="Helical" evidence="2">
    <location>
        <begin position="195"/>
        <end position="212"/>
    </location>
</feature>
<feature type="glycosylation site" description="N-linked (GlcNAc...) asparagine" evidence="2">
    <location>
        <position position="269"/>
    </location>
</feature>
<feature type="glycosylation site" description="N-linked (GlcNAc...) asparagine" evidence="2">
    <location>
        <position position="503"/>
    </location>
</feature>
<feature type="glycosylation site" description="N-linked (GlcNAc...) asparagine" evidence="2">
    <location>
        <position position="549"/>
    </location>
</feature>
<keyword id="KW-0325">Glycoprotein</keyword>
<keyword id="KW-0472">Membrane</keyword>
<keyword id="KW-0576">Peroxisome</keyword>
<keyword id="KW-0675">Receptor</keyword>
<keyword id="KW-1185">Reference proteome</keyword>
<keyword id="KW-0812">Transmembrane</keyword>
<keyword id="KW-1133">Transmembrane helix</keyword>
<name>INP2_EREGS</name>
<protein>
    <recommendedName>
        <fullName>Inheritance of peroxisomes protein 2</fullName>
    </recommendedName>
</protein>